<reference key="1">
    <citation type="journal article" date="2006" name="Proc. Natl. Acad. Sci. U.S.A.">
        <title>Comparative genomics of the lactic acid bacteria.</title>
        <authorList>
            <person name="Makarova K.S."/>
            <person name="Slesarev A."/>
            <person name="Wolf Y.I."/>
            <person name="Sorokin A."/>
            <person name="Mirkin B."/>
            <person name="Koonin E.V."/>
            <person name="Pavlov A."/>
            <person name="Pavlova N."/>
            <person name="Karamychev V."/>
            <person name="Polouchine N."/>
            <person name="Shakhova V."/>
            <person name="Grigoriev I."/>
            <person name="Lou Y."/>
            <person name="Rohksar D."/>
            <person name="Lucas S."/>
            <person name="Huang K."/>
            <person name="Goodstein D.M."/>
            <person name="Hawkins T."/>
            <person name="Plengvidhya V."/>
            <person name="Welker D."/>
            <person name="Hughes J."/>
            <person name="Goh Y."/>
            <person name="Benson A."/>
            <person name="Baldwin K."/>
            <person name="Lee J.-H."/>
            <person name="Diaz-Muniz I."/>
            <person name="Dosti B."/>
            <person name="Smeianov V."/>
            <person name="Wechter W."/>
            <person name="Barabote R."/>
            <person name="Lorca G."/>
            <person name="Altermann E."/>
            <person name="Barrangou R."/>
            <person name="Ganesan B."/>
            <person name="Xie Y."/>
            <person name="Rawsthorne H."/>
            <person name="Tamir D."/>
            <person name="Parker C."/>
            <person name="Breidt F."/>
            <person name="Broadbent J.R."/>
            <person name="Hutkins R."/>
            <person name="O'Sullivan D."/>
            <person name="Steele J."/>
            <person name="Unlu G."/>
            <person name="Saier M.H. Jr."/>
            <person name="Klaenhammer T."/>
            <person name="Richardson P."/>
            <person name="Kozyavkin S."/>
            <person name="Weimer B.C."/>
            <person name="Mills D.A."/>
        </authorList>
    </citation>
    <scope>NUCLEOTIDE SEQUENCE [LARGE SCALE GENOMIC DNA]</scope>
    <source>
        <strain>ATCC BAA-331 / PSU-1</strain>
    </source>
</reference>
<feature type="chain" id="PRO_0000296844" description="DNA-directed RNA polymerase subunit alpha">
    <location>
        <begin position="1"/>
        <end position="314"/>
    </location>
</feature>
<feature type="region of interest" description="Alpha N-terminal domain (alpha-NTD)" evidence="1">
    <location>
        <begin position="1"/>
        <end position="227"/>
    </location>
</feature>
<feature type="region of interest" description="Alpha C-terminal domain (alpha-CTD)" evidence="1">
    <location>
        <begin position="241"/>
        <end position="314"/>
    </location>
</feature>
<name>RPOA_OENOB</name>
<accession>Q04G60</accession>
<organism>
    <name type="scientific">Oenococcus oeni (strain ATCC BAA-331 / PSU-1)</name>
    <dbReference type="NCBI Taxonomy" id="203123"/>
    <lineage>
        <taxon>Bacteria</taxon>
        <taxon>Bacillati</taxon>
        <taxon>Bacillota</taxon>
        <taxon>Bacilli</taxon>
        <taxon>Lactobacillales</taxon>
        <taxon>Lactobacillaceae</taxon>
        <taxon>Oenococcus</taxon>
    </lineage>
</organism>
<dbReference type="EC" id="2.7.7.6" evidence="1"/>
<dbReference type="EMBL" id="CP000411">
    <property type="protein sequence ID" value="ABJ56562.1"/>
    <property type="molecule type" value="Genomic_DNA"/>
</dbReference>
<dbReference type="RefSeq" id="WP_002818479.1">
    <property type="nucleotide sequence ID" value="NC_008528.1"/>
</dbReference>
<dbReference type="SMR" id="Q04G60"/>
<dbReference type="STRING" id="203123.OEOE_0620"/>
<dbReference type="KEGG" id="ooe:OEOE_0620"/>
<dbReference type="eggNOG" id="COG0202">
    <property type="taxonomic scope" value="Bacteria"/>
</dbReference>
<dbReference type="HOGENOM" id="CLU_053084_0_1_9"/>
<dbReference type="Proteomes" id="UP000000774">
    <property type="component" value="Chromosome"/>
</dbReference>
<dbReference type="GO" id="GO:0005737">
    <property type="term" value="C:cytoplasm"/>
    <property type="evidence" value="ECO:0007669"/>
    <property type="project" value="UniProtKB-ARBA"/>
</dbReference>
<dbReference type="GO" id="GO:0000428">
    <property type="term" value="C:DNA-directed RNA polymerase complex"/>
    <property type="evidence" value="ECO:0007669"/>
    <property type="project" value="UniProtKB-KW"/>
</dbReference>
<dbReference type="GO" id="GO:0003677">
    <property type="term" value="F:DNA binding"/>
    <property type="evidence" value="ECO:0007669"/>
    <property type="project" value="UniProtKB-UniRule"/>
</dbReference>
<dbReference type="GO" id="GO:0003899">
    <property type="term" value="F:DNA-directed RNA polymerase activity"/>
    <property type="evidence" value="ECO:0007669"/>
    <property type="project" value="UniProtKB-UniRule"/>
</dbReference>
<dbReference type="GO" id="GO:0046983">
    <property type="term" value="F:protein dimerization activity"/>
    <property type="evidence" value="ECO:0007669"/>
    <property type="project" value="InterPro"/>
</dbReference>
<dbReference type="GO" id="GO:0006351">
    <property type="term" value="P:DNA-templated transcription"/>
    <property type="evidence" value="ECO:0007669"/>
    <property type="project" value="UniProtKB-UniRule"/>
</dbReference>
<dbReference type="CDD" id="cd06928">
    <property type="entry name" value="RNAP_alpha_NTD"/>
    <property type="match status" value="1"/>
</dbReference>
<dbReference type="FunFam" id="2.170.120.12:FF:000001">
    <property type="entry name" value="DNA-directed RNA polymerase subunit alpha"/>
    <property type="match status" value="1"/>
</dbReference>
<dbReference type="Gene3D" id="1.10.150.20">
    <property type="entry name" value="5' to 3' exonuclease, C-terminal subdomain"/>
    <property type="match status" value="1"/>
</dbReference>
<dbReference type="Gene3D" id="2.170.120.12">
    <property type="entry name" value="DNA-directed RNA polymerase, insert domain"/>
    <property type="match status" value="1"/>
</dbReference>
<dbReference type="Gene3D" id="3.30.1360.10">
    <property type="entry name" value="RNA polymerase, RBP11-like subunit"/>
    <property type="match status" value="1"/>
</dbReference>
<dbReference type="HAMAP" id="MF_00059">
    <property type="entry name" value="RNApol_bact_RpoA"/>
    <property type="match status" value="1"/>
</dbReference>
<dbReference type="InterPro" id="IPR011262">
    <property type="entry name" value="DNA-dir_RNA_pol_insert"/>
</dbReference>
<dbReference type="InterPro" id="IPR011263">
    <property type="entry name" value="DNA-dir_RNA_pol_RpoA/D/Rpb3"/>
</dbReference>
<dbReference type="InterPro" id="IPR011773">
    <property type="entry name" value="DNA-dir_RpoA"/>
</dbReference>
<dbReference type="InterPro" id="IPR036603">
    <property type="entry name" value="RBP11-like"/>
</dbReference>
<dbReference type="InterPro" id="IPR011260">
    <property type="entry name" value="RNAP_asu_C"/>
</dbReference>
<dbReference type="InterPro" id="IPR036643">
    <property type="entry name" value="RNApol_insert_sf"/>
</dbReference>
<dbReference type="NCBIfam" id="NF003513">
    <property type="entry name" value="PRK05182.1-2"/>
    <property type="match status" value="1"/>
</dbReference>
<dbReference type="NCBIfam" id="NF003515">
    <property type="entry name" value="PRK05182.2-1"/>
    <property type="match status" value="1"/>
</dbReference>
<dbReference type="NCBIfam" id="NF003519">
    <property type="entry name" value="PRK05182.2-5"/>
    <property type="match status" value="1"/>
</dbReference>
<dbReference type="NCBIfam" id="TIGR02027">
    <property type="entry name" value="rpoA"/>
    <property type="match status" value="1"/>
</dbReference>
<dbReference type="Pfam" id="PF01000">
    <property type="entry name" value="RNA_pol_A_bac"/>
    <property type="match status" value="1"/>
</dbReference>
<dbReference type="Pfam" id="PF03118">
    <property type="entry name" value="RNA_pol_A_CTD"/>
    <property type="match status" value="1"/>
</dbReference>
<dbReference type="Pfam" id="PF01193">
    <property type="entry name" value="RNA_pol_L"/>
    <property type="match status" value="1"/>
</dbReference>
<dbReference type="SMART" id="SM00662">
    <property type="entry name" value="RPOLD"/>
    <property type="match status" value="1"/>
</dbReference>
<dbReference type="SUPFAM" id="SSF47789">
    <property type="entry name" value="C-terminal domain of RNA polymerase alpha subunit"/>
    <property type="match status" value="1"/>
</dbReference>
<dbReference type="SUPFAM" id="SSF56553">
    <property type="entry name" value="Insert subdomain of RNA polymerase alpha subunit"/>
    <property type="match status" value="1"/>
</dbReference>
<dbReference type="SUPFAM" id="SSF55257">
    <property type="entry name" value="RBP11-like subunits of RNA polymerase"/>
    <property type="match status" value="1"/>
</dbReference>
<comment type="function">
    <text evidence="1">DNA-dependent RNA polymerase catalyzes the transcription of DNA into RNA using the four ribonucleoside triphosphates as substrates.</text>
</comment>
<comment type="catalytic activity">
    <reaction evidence="1">
        <text>RNA(n) + a ribonucleoside 5'-triphosphate = RNA(n+1) + diphosphate</text>
        <dbReference type="Rhea" id="RHEA:21248"/>
        <dbReference type="Rhea" id="RHEA-COMP:14527"/>
        <dbReference type="Rhea" id="RHEA-COMP:17342"/>
        <dbReference type="ChEBI" id="CHEBI:33019"/>
        <dbReference type="ChEBI" id="CHEBI:61557"/>
        <dbReference type="ChEBI" id="CHEBI:140395"/>
        <dbReference type="EC" id="2.7.7.6"/>
    </reaction>
</comment>
<comment type="subunit">
    <text evidence="1">Homodimer. The RNAP catalytic core consists of 2 alpha, 1 beta, 1 beta' and 1 omega subunit. When a sigma factor is associated with the core the holoenzyme is formed, which can initiate transcription.</text>
</comment>
<comment type="domain">
    <text evidence="1">The N-terminal domain is essential for RNAP assembly and basal transcription, whereas the C-terminal domain is involved in interaction with transcriptional regulators and with upstream promoter elements.</text>
</comment>
<comment type="similarity">
    <text evidence="1">Belongs to the RNA polymerase alpha chain family.</text>
</comment>
<sequence length="314" mass="34516">MIEFQKPTISTVEESENYGKFVAEPLERGYGTTLGNSLRRVLLSSLPGAAINSVQIDGVLHEFTTIDGVTEDVTQIILNLKKVAMRIDSDEQKTLEVDFSGAGELTAGDIKSDGDVEILNPDLHIATVSAGKSLHMALTAVRGRGYDSAEENKAKMELGIGVLAIDSIYTPISKVNYTVEKTRVGHRDDYDKLTLEVWTDGSVSPSESLSLGSKILSEHLALFIDLSNAGKKEMMLDPDAVETVMENKEPIEELELSVRSFNCLKRAGINTIEDLTDKTLHDMGEVRNLGRKSLEEIIQKLAERGQSFKQETEN</sequence>
<gene>
    <name evidence="1" type="primary">rpoA</name>
    <name type="ordered locus">OEOE_0620</name>
</gene>
<protein>
    <recommendedName>
        <fullName evidence="1">DNA-directed RNA polymerase subunit alpha</fullName>
        <shortName evidence="1">RNAP subunit alpha</shortName>
        <ecNumber evidence="1">2.7.7.6</ecNumber>
    </recommendedName>
    <alternativeName>
        <fullName evidence="1">RNA polymerase subunit alpha</fullName>
    </alternativeName>
    <alternativeName>
        <fullName evidence="1">Transcriptase subunit alpha</fullName>
    </alternativeName>
</protein>
<keyword id="KW-0240">DNA-directed RNA polymerase</keyword>
<keyword id="KW-0548">Nucleotidyltransferase</keyword>
<keyword id="KW-1185">Reference proteome</keyword>
<keyword id="KW-0804">Transcription</keyword>
<keyword id="KW-0808">Transferase</keyword>
<proteinExistence type="inferred from homology"/>
<evidence type="ECO:0000255" key="1">
    <source>
        <dbReference type="HAMAP-Rule" id="MF_00059"/>
    </source>
</evidence>